<proteinExistence type="inferred from homology"/>
<evidence type="ECO:0000255" key="1">
    <source>
        <dbReference type="HAMAP-Rule" id="MF_01031"/>
    </source>
</evidence>
<dbReference type="EC" id="4.2.1.33" evidence="1"/>
<dbReference type="EMBL" id="AM408590">
    <property type="protein sequence ID" value="CAL72997.1"/>
    <property type="molecule type" value="Genomic_DNA"/>
</dbReference>
<dbReference type="RefSeq" id="WP_003415110.1">
    <property type="nucleotide sequence ID" value="NC_008769.1"/>
</dbReference>
<dbReference type="SMR" id="A1KMY1"/>
<dbReference type="GeneID" id="45426976"/>
<dbReference type="KEGG" id="mbb:BCG_3008c"/>
<dbReference type="HOGENOM" id="CLU_081378_0_1_11"/>
<dbReference type="UniPathway" id="UPA00048">
    <property type="reaction ID" value="UER00071"/>
</dbReference>
<dbReference type="Proteomes" id="UP000001472">
    <property type="component" value="Chromosome"/>
</dbReference>
<dbReference type="GO" id="GO:0009316">
    <property type="term" value="C:3-isopropylmalate dehydratase complex"/>
    <property type="evidence" value="ECO:0007669"/>
    <property type="project" value="InterPro"/>
</dbReference>
<dbReference type="GO" id="GO:0003861">
    <property type="term" value="F:3-isopropylmalate dehydratase activity"/>
    <property type="evidence" value="ECO:0007669"/>
    <property type="project" value="UniProtKB-UniRule"/>
</dbReference>
<dbReference type="GO" id="GO:0009098">
    <property type="term" value="P:L-leucine biosynthetic process"/>
    <property type="evidence" value="ECO:0007669"/>
    <property type="project" value="UniProtKB-UniRule"/>
</dbReference>
<dbReference type="CDD" id="cd01577">
    <property type="entry name" value="IPMI_Swivel"/>
    <property type="match status" value="1"/>
</dbReference>
<dbReference type="FunFam" id="3.20.19.10:FF:000003">
    <property type="entry name" value="3-isopropylmalate dehydratase small subunit"/>
    <property type="match status" value="1"/>
</dbReference>
<dbReference type="Gene3D" id="3.20.19.10">
    <property type="entry name" value="Aconitase, domain 4"/>
    <property type="match status" value="1"/>
</dbReference>
<dbReference type="HAMAP" id="MF_01031">
    <property type="entry name" value="LeuD_type1"/>
    <property type="match status" value="1"/>
</dbReference>
<dbReference type="InterPro" id="IPR004431">
    <property type="entry name" value="3-IsopropMal_deHydase_ssu"/>
</dbReference>
<dbReference type="InterPro" id="IPR015928">
    <property type="entry name" value="Aconitase/3IPM_dehydase_swvl"/>
</dbReference>
<dbReference type="InterPro" id="IPR000573">
    <property type="entry name" value="AconitaseA/IPMdHydase_ssu_swvl"/>
</dbReference>
<dbReference type="InterPro" id="IPR033940">
    <property type="entry name" value="IPMI_Swivel"/>
</dbReference>
<dbReference type="InterPro" id="IPR050075">
    <property type="entry name" value="LeuD"/>
</dbReference>
<dbReference type="NCBIfam" id="TIGR00171">
    <property type="entry name" value="leuD"/>
    <property type="match status" value="1"/>
</dbReference>
<dbReference type="NCBIfam" id="NF002458">
    <property type="entry name" value="PRK01641.1"/>
    <property type="match status" value="1"/>
</dbReference>
<dbReference type="PANTHER" id="PTHR43345:SF5">
    <property type="entry name" value="3-ISOPROPYLMALATE DEHYDRATASE SMALL SUBUNIT"/>
    <property type="match status" value="1"/>
</dbReference>
<dbReference type="PANTHER" id="PTHR43345">
    <property type="entry name" value="3-ISOPROPYLMALATE DEHYDRATASE SMALL SUBUNIT 2-RELATED-RELATED"/>
    <property type="match status" value="1"/>
</dbReference>
<dbReference type="Pfam" id="PF00694">
    <property type="entry name" value="Aconitase_C"/>
    <property type="match status" value="1"/>
</dbReference>
<dbReference type="SUPFAM" id="SSF52016">
    <property type="entry name" value="LeuD/IlvD-like"/>
    <property type="match status" value="1"/>
</dbReference>
<feature type="chain" id="PRO_1000063788" description="3-isopropylmalate dehydratase small subunit">
    <location>
        <begin position="1"/>
        <end position="198"/>
    </location>
</feature>
<reference key="1">
    <citation type="journal article" date="2007" name="Proc. Natl. Acad. Sci. U.S.A.">
        <title>Genome plasticity of BCG and impact on vaccine efficacy.</title>
        <authorList>
            <person name="Brosch R."/>
            <person name="Gordon S.V."/>
            <person name="Garnier T."/>
            <person name="Eiglmeier K."/>
            <person name="Frigui W."/>
            <person name="Valenti P."/>
            <person name="Dos Santos S."/>
            <person name="Duthoy S."/>
            <person name="Lacroix C."/>
            <person name="Garcia-Pelayo C."/>
            <person name="Inwald J.K."/>
            <person name="Golby P."/>
            <person name="Garcia J.N."/>
            <person name="Hewinson R.G."/>
            <person name="Behr M.A."/>
            <person name="Quail M.A."/>
            <person name="Churcher C."/>
            <person name="Barrell B.G."/>
            <person name="Parkhill J."/>
            <person name="Cole S.T."/>
        </authorList>
    </citation>
    <scope>NUCLEOTIDE SEQUENCE [LARGE SCALE GENOMIC DNA]</scope>
    <source>
        <strain>BCG / Pasteur 1173P2</strain>
    </source>
</reference>
<gene>
    <name evidence="1" type="primary">leuD</name>
    <name type="ordered locus">BCG_3008c</name>
</gene>
<keyword id="KW-0028">Amino-acid biosynthesis</keyword>
<keyword id="KW-0100">Branched-chain amino acid biosynthesis</keyword>
<keyword id="KW-0432">Leucine biosynthesis</keyword>
<keyword id="KW-0456">Lyase</keyword>
<protein>
    <recommendedName>
        <fullName evidence="1">3-isopropylmalate dehydratase small subunit</fullName>
        <ecNumber evidence="1">4.2.1.33</ecNumber>
    </recommendedName>
    <alternativeName>
        <fullName evidence="1">Alpha-IPM isomerase</fullName>
        <shortName evidence="1">IPMI</shortName>
    </alternativeName>
    <alternativeName>
        <fullName evidence="1">Isopropylmalate isomerase</fullName>
    </alternativeName>
</protein>
<accession>A1KMY1</accession>
<sequence length="198" mass="21780">MEAFHTHSGIGVPLRRSNVDTDQIIPAVFLKRVTRTGFEDGLFAGWRSDPAFVLNLSPFDRGSVLVAGPDFGTGSSREHAVWALMDYGFRVVISSRFGDIFRGNAGKAGLLAAEVAQDDVELLWKLIEQSPGLEITANLQDRIITAATVVLPFKIDDHSAWRLLEGLDDIALTLRKLDEIEAFEGACAYWKPRTLPAP</sequence>
<comment type="function">
    <text evidence="1">Catalyzes the isomerization between 2-isopropylmalate and 3-isopropylmalate, via the formation of 2-isopropylmaleate.</text>
</comment>
<comment type="catalytic activity">
    <reaction evidence="1">
        <text>(2R,3S)-3-isopropylmalate = (2S)-2-isopropylmalate</text>
        <dbReference type="Rhea" id="RHEA:32287"/>
        <dbReference type="ChEBI" id="CHEBI:1178"/>
        <dbReference type="ChEBI" id="CHEBI:35121"/>
        <dbReference type="EC" id="4.2.1.33"/>
    </reaction>
</comment>
<comment type="pathway">
    <text evidence="1">Amino-acid biosynthesis; L-leucine biosynthesis; L-leucine from 3-methyl-2-oxobutanoate: step 2/4.</text>
</comment>
<comment type="subunit">
    <text evidence="1">Heterodimer of LeuC and LeuD.</text>
</comment>
<comment type="similarity">
    <text evidence="1">Belongs to the LeuD family. LeuD type 1 subfamily.</text>
</comment>
<organism>
    <name type="scientific">Mycobacterium bovis (strain BCG / Pasteur 1173P2)</name>
    <dbReference type="NCBI Taxonomy" id="410289"/>
    <lineage>
        <taxon>Bacteria</taxon>
        <taxon>Bacillati</taxon>
        <taxon>Actinomycetota</taxon>
        <taxon>Actinomycetes</taxon>
        <taxon>Mycobacteriales</taxon>
        <taxon>Mycobacteriaceae</taxon>
        <taxon>Mycobacterium</taxon>
        <taxon>Mycobacterium tuberculosis complex</taxon>
    </lineage>
</organism>
<name>LEUD_MYCBP</name>